<protein>
    <recommendedName>
        <fullName evidence="1">ATP-dependent protease subunit HslV</fullName>
        <ecNumber evidence="1">3.4.25.2</ecNumber>
    </recommendedName>
</protein>
<keyword id="KW-0021">Allosteric enzyme</keyword>
<keyword id="KW-0963">Cytoplasm</keyword>
<keyword id="KW-0378">Hydrolase</keyword>
<keyword id="KW-0479">Metal-binding</keyword>
<keyword id="KW-0645">Protease</keyword>
<keyword id="KW-0915">Sodium</keyword>
<keyword id="KW-0888">Threonine protease</keyword>
<accession>B9KRG9</accession>
<proteinExistence type="inferred from homology"/>
<evidence type="ECO:0000255" key="1">
    <source>
        <dbReference type="HAMAP-Rule" id="MF_00248"/>
    </source>
</evidence>
<gene>
    <name evidence="1" type="primary">hslV</name>
    <name type="ordered locus">RSKD131_2923</name>
</gene>
<comment type="function">
    <text evidence="1">Protease subunit of a proteasome-like degradation complex believed to be a general protein degrading machinery.</text>
</comment>
<comment type="catalytic activity">
    <reaction evidence="1">
        <text>ATP-dependent cleavage of peptide bonds with broad specificity.</text>
        <dbReference type="EC" id="3.4.25.2"/>
    </reaction>
</comment>
<comment type="activity regulation">
    <text evidence="1">Allosterically activated by HslU binding.</text>
</comment>
<comment type="subunit">
    <text evidence="1">A double ring-shaped homohexamer of HslV is capped on each side by a ring-shaped HslU homohexamer. The assembly of the HslU/HslV complex is dependent on binding of ATP.</text>
</comment>
<comment type="subcellular location">
    <subcellularLocation>
        <location evidence="1">Cytoplasm</location>
    </subcellularLocation>
</comment>
<comment type="similarity">
    <text evidence="1">Belongs to the peptidase T1B family. HslV subfamily.</text>
</comment>
<name>HSLV_CERSK</name>
<dbReference type="EC" id="3.4.25.2" evidence="1"/>
<dbReference type="EMBL" id="CP001150">
    <property type="protein sequence ID" value="ACM02783.1"/>
    <property type="molecule type" value="Genomic_DNA"/>
</dbReference>
<dbReference type="RefSeq" id="WP_015921759.1">
    <property type="nucleotide sequence ID" value="NC_011963.1"/>
</dbReference>
<dbReference type="SMR" id="B9KRG9"/>
<dbReference type="MEROPS" id="T01.006"/>
<dbReference type="GeneID" id="67448294"/>
<dbReference type="KEGG" id="rsk:RSKD131_2923"/>
<dbReference type="HOGENOM" id="CLU_093872_1_0_5"/>
<dbReference type="GO" id="GO:0009376">
    <property type="term" value="C:HslUV protease complex"/>
    <property type="evidence" value="ECO:0007669"/>
    <property type="project" value="UniProtKB-UniRule"/>
</dbReference>
<dbReference type="GO" id="GO:0005839">
    <property type="term" value="C:proteasome core complex"/>
    <property type="evidence" value="ECO:0007669"/>
    <property type="project" value="InterPro"/>
</dbReference>
<dbReference type="GO" id="GO:0046872">
    <property type="term" value="F:metal ion binding"/>
    <property type="evidence" value="ECO:0007669"/>
    <property type="project" value="UniProtKB-KW"/>
</dbReference>
<dbReference type="GO" id="GO:0004298">
    <property type="term" value="F:threonine-type endopeptidase activity"/>
    <property type="evidence" value="ECO:0007669"/>
    <property type="project" value="UniProtKB-KW"/>
</dbReference>
<dbReference type="GO" id="GO:0051603">
    <property type="term" value="P:proteolysis involved in protein catabolic process"/>
    <property type="evidence" value="ECO:0007669"/>
    <property type="project" value="InterPro"/>
</dbReference>
<dbReference type="CDD" id="cd01913">
    <property type="entry name" value="protease_HslV"/>
    <property type="match status" value="1"/>
</dbReference>
<dbReference type="Gene3D" id="3.60.20.10">
    <property type="entry name" value="Glutamine Phosphoribosylpyrophosphate, subunit 1, domain 1"/>
    <property type="match status" value="1"/>
</dbReference>
<dbReference type="HAMAP" id="MF_00248">
    <property type="entry name" value="HslV"/>
    <property type="match status" value="1"/>
</dbReference>
<dbReference type="InterPro" id="IPR022281">
    <property type="entry name" value="ATP-dep_Prtase_HsIV_su"/>
</dbReference>
<dbReference type="InterPro" id="IPR029055">
    <property type="entry name" value="Ntn_hydrolases_N"/>
</dbReference>
<dbReference type="InterPro" id="IPR001353">
    <property type="entry name" value="Proteasome_sua/b"/>
</dbReference>
<dbReference type="InterPro" id="IPR023333">
    <property type="entry name" value="Proteasome_suB-type"/>
</dbReference>
<dbReference type="NCBIfam" id="TIGR03692">
    <property type="entry name" value="ATP_dep_HslV"/>
    <property type="match status" value="1"/>
</dbReference>
<dbReference type="NCBIfam" id="NF003964">
    <property type="entry name" value="PRK05456.1"/>
    <property type="match status" value="1"/>
</dbReference>
<dbReference type="PANTHER" id="PTHR32194:SF7">
    <property type="entry name" value="ATP-DEPENDENT PROTEASE SUBUNIT HSLV"/>
    <property type="match status" value="1"/>
</dbReference>
<dbReference type="PANTHER" id="PTHR32194">
    <property type="entry name" value="METALLOPROTEASE TLDD"/>
    <property type="match status" value="1"/>
</dbReference>
<dbReference type="Pfam" id="PF00227">
    <property type="entry name" value="Proteasome"/>
    <property type="match status" value="1"/>
</dbReference>
<dbReference type="PIRSF" id="PIRSF039093">
    <property type="entry name" value="HslV"/>
    <property type="match status" value="1"/>
</dbReference>
<dbReference type="SUPFAM" id="SSF56235">
    <property type="entry name" value="N-terminal nucleophile aminohydrolases (Ntn hydrolases)"/>
    <property type="match status" value="1"/>
</dbReference>
<dbReference type="PROSITE" id="PS51476">
    <property type="entry name" value="PROTEASOME_BETA_2"/>
    <property type="match status" value="1"/>
</dbReference>
<organism>
    <name type="scientific">Cereibacter sphaeroides (strain KD131 / KCTC 12085)</name>
    <name type="common">Rhodobacter sphaeroides</name>
    <dbReference type="NCBI Taxonomy" id="557760"/>
    <lineage>
        <taxon>Bacteria</taxon>
        <taxon>Pseudomonadati</taxon>
        <taxon>Pseudomonadota</taxon>
        <taxon>Alphaproteobacteria</taxon>
        <taxon>Rhodobacterales</taxon>
        <taxon>Paracoccaceae</taxon>
        <taxon>Cereibacter</taxon>
    </lineage>
</organism>
<sequence length="185" mass="19570">MAEERFPGWHGTTILAVRRGGEVVVAGDGQVSLGQTVIKGTARKVRRLSPGGHEVVAGFAGSTADAFTLLERLEKKLEAAPGQLARACVELAKDWRMDKYLRNLEAMLIVTDGETLLVLTGAGDVLEPEHDVTAIGSGGNFALAAARGLMATELPAEEIARKAMAIAADICVYTNGNLTVERISK</sequence>
<feature type="chain" id="PRO_1000125415" description="ATP-dependent protease subunit HslV">
    <location>
        <begin position="1"/>
        <end position="185"/>
    </location>
</feature>
<feature type="active site" evidence="1">
    <location>
        <position position="12"/>
    </location>
</feature>
<feature type="binding site" evidence="1">
    <location>
        <position position="168"/>
    </location>
    <ligand>
        <name>Na(+)</name>
        <dbReference type="ChEBI" id="CHEBI:29101"/>
    </ligand>
</feature>
<feature type="binding site" evidence="1">
    <location>
        <position position="171"/>
    </location>
    <ligand>
        <name>Na(+)</name>
        <dbReference type="ChEBI" id="CHEBI:29101"/>
    </ligand>
</feature>
<feature type="binding site" evidence="1">
    <location>
        <position position="174"/>
    </location>
    <ligand>
        <name>Na(+)</name>
        <dbReference type="ChEBI" id="CHEBI:29101"/>
    </ligand>
</feature>
<reference key="1">
    <citation type="journal article" date="2009" name="J. Bacteriol.">
        <title>Complete genome sequence of Rhodobacter sphaeroides KD131.</title>
        <authorList>
            <person name="Lim S.-K."/>
            <person name="Kim S.J."/>
            <person name="Cha S.H."/>
            <person name="Oh Y.-K."/>
            <person name="Rhee H.-J."/>
            <person name="Kim M.-S."/>
            <person name="Lee J.K."/>
        </authorList>
    </citation>
    <scope>NUCLEOTIDE SEQUENCE [LARGE SCALE GENOMIC DNA]</scope>
    <source>
        <strain>KD131 / KCTC 12085</strain>
    </source>
</reference>